<name>DEOC2_VIBVY</name>
<protein>
    <recommendedName>
        <fullName evidence="1">Deoxyribose-phosphate aldolase 2</fullName>
        <shortName evidence="1">DERA 2</shortName>
        <ecNumber evidence="1">4.1.2.4</ecNumber>
    </recommendedName>
    <alternativeName>
        <fullName evidence="1">2-deoxy-D-ribose 5-phosphate aldolase 2</fullName>
    </alternativeName>
    <alternativeName>
        <fullName evidence="1">Phosphodeoxyriboaldolase 2</fullName>
        <shortName evidence="1">Deoxyriboaldolase 2</shortName>
    </alternativeName>
</protein>
<sequence>MSDLKAAALRALKLMDLTTLNDDDTDAKVIALCHDAKTPVGNTAAICIYPRFIPIAKKTLREQGTPEVRIATVTNFPHGNDDIEIAVAETKAAVAYGADEVDVVFPYRALMAGDEKVGFELVKQCKEACGDILLKVIIETGELKEEALIKKASQICIEAGADFIKTSTGKVPVNATPEYARMMLEVIRDMGVAEKVGFKPAGGVRTAEDAAAYLAMADDILGSEWADNMHYRFGASSLLTNLLNTLEVTDQVADPAAY</sequence>
<feature type="chain" id="PRO_0000057308" description="Deoxyribose-phosphate aldolase 2">
    <location>
        <begin position="1"/>
        <end position="258"/>
    </location>
</feature>
<feature type="active site" description="Proton donor/acceptor" evidence="1">
    <location>
        <position position="102"/>
    </location>
</feature>
<feature type="active site" description="Schiff-base intermediate with acetaldehyde" evidence="1">
    <location>
        <position position="165"/>
    </location>
</feature>
<feature type="active site" description="Proton donor/acceptor" evidence="1">
    <location>
        <position position="199"/>
    </location>
</feature>
<gene>
    <name type="primary">deoC2</name>
    <name type="ordered locus">VV2679</name>
</gene>
<organism>
    <name type="scientific">Vibrio vulnificus (strain YJ016)</name>
    <dbReference type="NCBI Taxonomy" id="196600"/>
    <lineage>
        <taxon>Bacteria</taxon>
        <taxon>Pseudomonadati</taxon>
        <taxon>Pseudomonadota</taxon>
        <taxon>Gammaproteobacteria</taxon>
        <taxon>Vibrionales</taxon>
        <taxon>Vibrionaceae</taxon>
        <taxon>Vibrio</taxon>
    </lineage>
</organism>
<comment type="function">
    <text evidence="1">Catalyzes a reversible aldol reaction between acetaldehyde and D-glyceraldehyde 3-phosphate to generate 2-deoxy-D-ribose 5-phosphate.</text>
</comment>
<comment type="catalytic activity">
    <reaction evidence="1">
        <text>2-deoxy-D-ribose 5-phosphate = D-glyceraldehyde 3-phosphate + acetaldehyde</text>
        <dbReference type="Rhea" id="RHEA:12821"/>
        <dbReference type="ChEBI" id="CHEBI:15343"/>
        <dbReference type="ChEBI" id="CHEBI:59776"/>
        <dbReference type="ChEBI" id="CHEBI:62877"/>
        <dbReference type="EC" id="4.1.2.4"/>
    </reaction>
</comment>
<comment type="pathway">
    <text evidence="1">Carbohydrate degradation; 2-deoxy-D-ribose 1-phosphate degradation; D-glyceraldehyde 3-phosphate and acetaldehyde from 2-deoxy-alpha-D-ribose 1-phosphate: step 2/2.</text>
</comment>
<comment type="subcellular location">
    <subcellularLocation>
        <location evidence="1">Cytoplasm</location>
    </subcellularLocation>
</comment>
<comment type="similarity">
    <text evidence="1 2">Belongs to the DeoC/FbaB aldolase family. DeoC type 2 subfamily.</text>
</comment>
<dbReference type="EC" id="4.1.2.4" evidence="1"/>
<dbReference type="EMBL" id="BA000037">
    <property type="protein sequence ID" value="BAC95443.1"/>
    <property type="molecule type" value="Genomic_DNA"/>
</dbReference>
<dbReference type="SMR" id="Q7MI38"/>
<dbReference type="STRING" id="672.VV93_v1c24000"/>
<dbReference type="KEGG" id="vvy:VV2679"/>
<dbReference type="eggNOG" id="COG0274">
    <property type="taxonomic scope" value="Bacteria"/>
</dbReference>
<dbReference type="HOGENOM" id="CLU_053595_3_1_6"/>
<dbReference type="UniPathway" id="UPA00002">
    <property type="reaction ID" value="UER00468"/>
</dbReference>
<dbReference type="Proteomes" id="UP000002675">
    <property type="component" value="Chromosome I"/>
</dbReference>
<dbReference type="GO" id="GO:0005737">
    <property type="term" value="C:cytoplasm"/>
    <property type="evidence" value="ECO:0007669"/>
    <property type="project" value="UniProtKB-SubCell"/>
</dbReference>
<dbReference type="GO" id="GO:0004139">
    <property type="term" value="F:deoxyribose-phosphate aldolase activity"/>
    <property type="evidence" value="ECO:0007669"/>
    <property type="project" value="UniProtKB-UniRule"/>
</dbReference>
<dbReference type="GO" id="GO:0006018">
    <property type="term" value="P:2-deoxyribose 1-phosphate catabolic process"/>
    <property type="evidence" value="ECO:0007669"/>
    <property type="project" value="UniProtKB-UniRule"/>
</dbReference>
<dbReference type="GO" id="GO:0016052">
    <property type="term" value="P:carbohydrate catabolic process"/>
    <property type="evidence" value="ECO:0007669"/>
    <property type="project" value="TreeGrafter"/>
</dbReference>
<dbReference type="GO" id="GO:0009264">
    <property type="term" value="P:deoxyribonucleotide catabolic process"/>
    <property type="evidence" value="ECO:0007669"/>
    <property type="project" value="InterPro"/>
</dbReference>
<dbReference type="CDD" id="cd00959">
    <property type="entry name" value="DeoC"/>
    <property type="match status" value="1"/>
</dbReference>
<dbReference type="FunFam" id="3.20.20.70:FF:000034">
    <property type="entry name" value="Deoxyribose-phosphate aldolase"/>
    <property type="match status" value="1"/>
</dbReference>
<dbReference type="Gene3D" id="3.20.20.70">
    <property type="entry name" value="Aldolase class I"/>
    <property type="match status" value="1"/>
</dbReference>
<dbReference type="HAMAP" id="MF_00592">
    <property type="entry name" value="DeoC_type2"/>
    <property type="match status" value="1"/>
</dbReference>
<dbReference type="InterPro" id="IPR013785">
    <property type="entry name" value="Aldolase_TIM"/>
</dbReference>
<dbReference type="InterPro" id="IPR011343">
    <property type="entry name" value="DeoC"/>
</dbReference>
<dbReference type="InterPro" id="IPR002915">
    <property type="entry name" value="DeoC/FbaB/LacD_aldolase"/>
</dbReference>
<dbReference type="InterPro" id="IPR023649">
    <property type="entry name" value="DeoC_typeII"/>
</dbReference>
<dbReference type="NCBIfam" id="TIGR00126">
    <property type="entry name" value="deoC"/>
    <property type="match status" value="1"/>
</dbReference>
<dbReference type="PANTHER" id="PTHR10889">
    <property type="entry name" value="DEOXYRIBOSE-PHOSPHATE ALDOLASE"/>
    <property type="match status" value="1"/>
</dbReference>
<dbReference type="PANTHER" id="PTHR10889:SF3">
    <property type="entry name" value="DEOXYRIBOSE-PHOSPHATE ALDOLASE"/>
    <property type="match status" value="1"/>
</dbReference>
<dbReference type="Pfam" id="PF01791">
    <property type="entry name" value="DeoC"/>
    <property type="match status" value="1"/>
</dbReference>
<dbReference type="PIRSF" id="PIRSF001357">
    <property type="entry name" value="DeoC"/>
    <property type="match status" value="1"/>
</dbReference>
<dbReference type="SMART" id="SM01133">
    <property type="entry name" value="DeoC"/>
    <property type="match status" value="1"/>
</dbReference>
<dbReference type="SUPFAM" id="SSF51569">
    <property type="entry name" value="Aldolase"/>
    <property type="match status" value="1"/>
</dbReference>
<accession>Q7MI38</accession>
<reference key="1">
    <citation type="journal article" date="2003" name="Genome Res.">
        <title>Comparative genome analysis of Vibrio vulnificus, a marine pathogen.</title>
        <authorList>
            <person name="Chen C.-Y."/>
            <person name="Wu K.-M."/>
            <person name="Chang Y.-C."/>
            <person name="Chang C.-H."/>
            <person name="Tsai H.-C."/>
            <person name="Liao T.-L."/>
            <person name="Liu Y.-M."/>
            <person name="Chen H.-J."/>
            <person name="Shen A.B.-T."/>
            <person name="Li J.-C."/>
            <person name="Su T.-L."/>
            <person name="Shao C.-P."/>
            <person name="Lee C.-T."/>
            <person name="Hor L.-I."/>
            <person name="Tsai S.-F."/>
        </authorList>
    </citation>
    <scope>NUCLEOTIDE SEQUENCE [LARGE SCALE GENOMIC DNA]</scope>
    <source>
        <strain>YJ016</strain>
    </source>
</reference>
<proteinExistence type="inferred from homology"/>
<keyword id="KW-0963">Cytoplasm</keyword>
<keyword id="KW-0456">Lyase</keyword>
<keyword id="KW-0704">Schiff base</keyword>
<evidence type="ECO:0000255" key="1">
    <source>
        <dbReference type="HAMAP-Rule" id="MF_00592"/>
    </source>
</evidence>
<evidence type="ECO:0000305" key="2"/>